<feature type="chain" id="PRO_0000243935" description="Profilin-4">
    <location>
        <begin position="1"/>
        <end position="129"/>
    </location>
</feature>
<gene>
    <name type="primary">PFN4</name>
</gene>
<evidence type="ECO:0000250" key="1">
    <source>
        <dbReference type="UniProtKB" id="Q5IRJ7"/>
    </source>
</evidence>
<evidence type="ECO:0000250" key="2">
    <source>
        <dbReference type="UniProtKB" id="Q8NHR9"/>
    </source>
</evidence>
<evidence type="ECO:0000250" key="3">
    <source>
        <dbReference type="UniProtKB" id="Q9D6I3"/>
    </source>
</evidence>
<evidence type="ECO:0000305" key="4"/>
<keyword id="KW-0963">Cytoplasm</keyword>
<keyword id="KW-0217">Developmental protein</keyword>
<keyword id="KW-0221">Differentiation</keyword>
<keyword id="KW-0446">Lipid-binding</keyword>
<keyword id="KW-1185">Reference proteome</keyword>
<keyword id="KW-0744">Spermatogenesis</keyword>
<accession>Q2NKT1</accession>
<protein>
    <recommendedName>
        <fullName>Profilin-4</fullName>
    </recommendedName>
</protein>
<organism>
    <name type="scientific">Bos taurus</name>
    <name type="common">Bovine</name>
    <dbReference type="NCBI Taxonomy" id="9913"/>
    <lineage>
        <taxon>Eukaryota</taxon>
        <taxon>Metazoa</taxon>
        <taxon>Chordata</taxon>
        <taxon>Craniata</taxon>
        <taxon>Vertebrata</taxon>
        <taxon>Euteleostomi</taxon>
        <taxon>Mammalia</taxon>
        <taxon>Eutheria</taxon>
        <taxon>Laurasiatheria</taxon>
        <taxon>Artiodactyla</taxon>
        <taxon>Ruminantia</taxon>
        <taxon>Pecora</taxon>
        <taxon>Bovidae</taxon>
        <taxon>Bovinae</taxon>
        <taxon>Bos</taxon>
    </lineage>
</organism>
<name>PROF4_BOVIN</name>
<dbReference type="EMBL" id="BC111657">
    <property type="protein sequence ID" value="AAI11658.1"/>
    <property type="molecule type" value="mRNA"/>
</dbReference>
<dbReference type="RefSeq" id="NP_001068845.1">
    <property type="nucleotide sequence ID" value="NM_001075377.2"/>
</dbReference>
<dbReference type="SMR" id="Q2NKT1"/>
<dbReference type="FunCoup" id="Q2NKT1">
    <property type="interactions" value="452"/>
</dbReference>
<dbReference type="STRING" id="9913.ENSBTAP00000004412"/>
<dbReference type="PaxDb" id="9913-ENSBTAP00000004412"/>
<dbReference type="Ensembl" id="ENSBTAT00000004412.3">
    <property type="protein sequence ID" value="ENSBTAP00000004412.2"/>
    <property type="gene ID" value="ENSBTAG00000003404.3"/>
</dbReference>
<dbReference type="GeneID" id="508874"/>
<dbReference type="KEGG" id="bta:508874"/>
<dbReference type="CTD" id="375189"/>
<dbReference type="VEuPathDB" id="HostDB:ENSBTAG00000003404"/>
<dbReference type="VGNC" id="VGNC:32778">
    <property type="gene designation" value="PFN4"/>
</dbReference>
<dbReference type="eggNOG" id="KOG1755">
    <property type="taxonomic scope" value="Eukaryota"/>
</dbReference>
<dbReference type="GeneTree" id="ENSGT00390000017067"/>
<dbReference type="HOGENOM" id="CLU_120772_2_0_1"/>
<dbReference type="InParanoid" id="Q2NKT1"/>
<dbReference type="OMA" id="QGQKFML"/>
<dbReference type="OrthoDB" id="421374at2759"/>
<dbReference type="TreeFam" id="TF101075"/>
<dbReference type="Proteomes" id="UP000009136">
    <property type="component" value="Chromosome 11"/>
</dbReference>
<dbReference type="Bgee" id="ENSBTAG00000003404">
    <property type="expression patterns" value="Expressed in spermatocyte and 84 other cell types or tissues"/>
</dbReference>
<dbReference type="GO" id="GO:0005938">
    <property type="term" value="C:cell cortex"/>
    <property type="evidence" value="ECO:0000318"/>
    <property type="project" value="GO_Central"/>
</dbReference>
<dbReference type="GO" id="GO:0003785">
    <property type="term" value="F:actin monomer binding"/>
    <property type="evidence" value="ECO:0000318"/>
    <property type="project" value="GO_Central"/>
</dbReference>
<dbReference type="GO" id="GO:0008289">
    <property type="term" value="F:lipid binding"/>
    <property type="evidence" value="ECO:0007669"/>
    <property type="project" value="UniProtKB-KW"/>
</dbReference>
<dbReference type="GO" id="GO:0001675">
    <property type="term" value="P:acrosome assembly"/>
    <property type="evidence" value="ECO:0000250"/>
    <property type="project" value="UniProtKB"/>
</dbReference>
<dbReference type="GO" id="GO:0030317">
    <property type="term" value="P:flagellated sperm motility"/>
    <property type="evidence" value="ECO:0000250"/>
    <property type="project" value="UniProtKB"/>
</dbReference>
<dbReference type="GO" id="GO:1905198">
    <property type="term" value="P:manchette assembly"/>
    <property type="evidence" value="ECO:0000250"/>
    <property type="project" value="UniProtKB"/>
</dbReference>
<dbReference type="GO" id="GO:0120316">
    <property type="term" value="P:sperm flagellum assembly"/>
    <property type="evidence" value="ECO:0000250"/>
    <property type="project" value="UniProtKB"/>
</dbReference>
<dbReference type="GO" id="GO:0007283">
    <property type="term" value="P:spermatogenesis"/>
    <property type="evidence" value="ECO:0000250"/>
    <property type="project" value="UniProtKB"/>
</dbReference>
<dbReference type="CDD" id="cd00148">
    <property type="entry name" value="PROF"/>
    <property type="match status" value="1"/>
</dbReference>
<dbReference type="FunFam" id="3.30.450.30:FF:000007">
    <property type="entry name" value="Profilin"/>
    <property type="match status" value="1"/>
</dbReference>
<dbReference type="Gene3D" id="3.30.450.30">
    <property type="entry name" value="Dynein light chain 2a, cytoplasmic"/>
    <property type="match status" value="1"/>
</dbReference>
<dbReference type="InterPro" id="IPR048278">
    <property type="entry name" value="PFN"/>
</dbReference>
<dbReference type="InterPro" id="IPR005455">
    <property type="entry name" value="PFN_euk"/>
</dbReference>
<dbReference type="InterPro" id="IPR036140">
    <property type="entry name" value="PFN_sf"/>
</dbReference>
<dbReference type="PANTHER" id="PTHR11604">
    <property type="entry name" value="PROFILIN"/>
    <property type="match status" value="1"/>
</dbReference>
<dbReference type="PANTHER" id="PTHR11604:SF2">
    <property type="entry name" value="PROFILIN-4"/>
    <property type="match status" value="1"/>
</dbReference>
<dbReference type="Pfam" id="PF00235">
    <property type="entry name" value="Profilin"/>
    <property type="match status" value="1"/>
</dbReference>
<dbReference type="SMART" id="SM00392">
    <property type="entry name" value="PROF"/>
    <property type="match status" value="1"/>
</dbReference>
<dbReference type="SUPFAM" id="SSF55770">
    <property type="entry name" value="Profilin (actin-binding protein)"/>
    <property type="match status" value="1"/>
</dbReference>
<comment type="function">
    <text evidence="2 3">Involved in male fertility. Required for manchette development and acrosome biogenesis during spermiogenesis (By similarity). Binds in vitro to phospholipids, including phosphatidylinositol 3-phosphate (PtdIns(3)P), phosphatidylinositol 4,5-bisphosphate (PtdIns(4,5)P2), phosphatidylinositol 4-phosphate (PtdIns(4)P) and phosphatidic acid (PA). Contrary to other profilin family members, does not bind to actin in vitro (By similarity).</text>
</comment>
<comment type="subcellular location">
    <subcellularLocation>
        <location evidence="1">Cytoplasm</location>
    </subcellularLocation>
    <text evidence="1">In round spermatids, mainly observed in the acroplaxome. During the progression of spermiogenesis, relocalizes to the developing manchette of spermatids step 8 (S8). Coinciding with the initiation of manchette disassembly in spermatids S14, seen in the cytoplasm subjacent to the disassembling manchette.</text>
</comment>
<comment type="similarity">
    <text evidence="4">Belongs to the profilin family.</text>
</comment>
<reference key="1">
    <citation type="submission" date="2006-01" db="EMBL/GenBank/DDBJ databases">
        <authorList>
            <consortium name="NIH - Mammalian Gene Collection (MGC) project"/>
        </authorList>
    </citation>
    <scope>NUCLEOTIDE SEQUENCE [LARGE SCALE MRNA]</scope>
    <source>
        <strain>Hereford</strain>
        <tissue>Testis</tissue>
    </source>
</reference>
<proteinExistence type="evidence at transcript level"/>
<sequence>MSHLQNLLLDTLLGTKHVDSAALIKLQERSLCVASPGFSVMPSDVRTLVNGFAKNPLKTRREGLYFKEKDYKCVRADDYSLYAKNENTGVIVVKTHLYLLVATYSEGMYPSVCVEATEKLGDYLRRKGN</sequence>